<accession>Q9ZU27</accession>
<sequence length="650" mass="73879">MKLLRRRFFNSVNTITRPNRRHYATKYVAKVTSSSPSGRSLSAEVSLPNPLPADVRGYPLPRRHLICRATNLITGASNLSDAFSDLSDYLSSLSLSLTPDEASEILKSLNSPLLAVEFFKLVPSLCPYSQNDPFLYNRIILILSRSNLPDRFDRVRSILDSMVKSNVHGNISTVNILIGFFGNTEDLQMCLRLVKKWDLKMNSFTYKCLLQAYLRSRDYSKAFDVYCEIRRGGHKLDIFAYNMLLDALAKDEKACQVFEDMKKRHCRRDEYTYTIMIRTMGRIGKCDEAVGLFNEMITEGLTLNVVGYNTLMQVLAKGKMVDKAIQVFSRMVETGCRPNEYTYSLLLNLLVAEGQLVRLDGVVEISKRYMTQGIYSYLVRTLSKLGHVSEAHRLFCDMWSFPVKGERDSYMSMLESLCGAGKTIEAIEMLSKIHEKGVVTDTMMYNTVFSALGKLKQISHIHDLFEKMKKDGPSPDIFTYNILIASFGRVGEVDEAINIFEELERSDCKPDIISYNSLINCLGKNGDVDEAHVRFKEMQEKGLNPDVVTYSTLMECFGKTERVEMAYSLFEEMLVKGCQPNIVTYNILLDCLEKNGRTAEAVDLYSKMKQQGLTPDSITYTVLERLQSVSHGKSRIRRKNPITGWVVSPL</sequence>
<gene>
    <name type="ordered locus">At1g51965</name>
    <name type="ORF">F5F19.2</name>
</gene>
<proteinExistence type="evidence at transcript level"/>
<keyword id="KW-0496">Mitochondrion</keyword>
<keyword id="KW-1185">Reference proteome</keyword>
<keyword id="KW-0677">Repeat</keyword>
<keyword id="KW-0809">Transit peptide</keyword>
<comment type="subcellular location">
    <subcellularLocation>
        <location evidence="3">Mitochondrion</location>
    </subcellularLocation>
</comment>
<comment type="similarity">
    <text evidence="2">Belongs to the PPR family. P subfamily.</text>
</comment>
<comment type="online information" name="Pentatricopeptide repeat proteins">
    <link uri="https://ppr.plantenergy.uwa.edu.au"/>
</comment>
<reference key="1">
    <citation type="journal article" date="2000" name="Nature">
        <title>Sequence and analysis of chromosome 1 of the plant Arabidopsis thaliana.</title>
        <authorList>
            <person name="Theologis A."/>
            <person name="Ecker J.R."/>
            <person name="Palm C.J."/>
            <person name="Federspiel N.A."/>
            <person name="Kaul S."/>
            <person name="White O."/>
            <person name="Alonso J."/>
            <person name="Altafi H."/>
            <person name="Araujo R."/>
            <person name="Bowman C.L."/>
            <person name="Brooks S.Y."/>
            <person name="Buehler E."/>
            <person name="Chan A."/>
            <person name="Chao Q."/>
            <person name="Chen H."/>
            <person name="Cheuk R.F."/>
            <person name="Chin C.W."/>
            <person name="Chung M.K."/>
            <person name="Conn L."/>
            <person name="Conway A.B."/>
            <person name="Conway A.R."/>
            <person name="Creasy T.H."/>
            <person name="Dewar K."/>
            <person name="Dunn P."/>
            <person name="Etgu P."/>
            <person name="Feldblyum T.V."/>
            <person name="Feng J.-D."/>
            <person name="Fong B."/>
            <person name="Fujii C.Y."/>
            <person name="Gill J.E."/>
            <person name="Goldsmith A.D."/>
            <person name="Haas B."/>
            <person name="Hansen N.F."/>
            <person name="Hughes B."/>
            <person name="Huizar L."/>
            <person name="Hunter J.L."/>
            <person name="Jenkins J."/>
            <person name="Johnson-Hopson C."/>
            <person name="Khan S."/>
            <person name="Khaykin E."/>
            <person name="Kim C.J."/>
            <person name="Koo H.L."/>
            <person name="Kremenetskaia I."/>
            <person name="Kurtz D.B."/>
            <person name="Kwan A."/>
            <person name="Lam B."/>
            <person name="Langin-Hooper S."/>
            <person name="Lee A."/>
            <person name="Lee J.M."/>
            <person name="Lenz C.A."/>
            <person name="Li J.H."/>
            <person name="Li Y.-P."/>
            <person name="Lin X."/>
            <person name="Liu S.X."/>
            <person name="Liu Z.A."/>
            <person name="Luros J.S."/>
            <person name="Maiti R."/>
            <person name="Marziali A."/>
            <person name="Militscher J."/>
            <person name="Miranda M."/>
            <person name="Nguyen M."/>
            <person name="Nierman W.C."/>
            <person name="Osborne B.I."/>
            <person name="Pai G."/>
            <person name="Peterson J."/>
            <person name="Pham P.K."/>
            <person name="Rizzo M."/>
            <person name="Rooney T."/>
            <person name="Rowley D."/>
            <person name="Sakano H."/>
            <person name="Salzberg S.L."/>
            <person name="Schwartz J.R."/>
            <person name="Shinn P."/>
            <person name="Southwick A.M."/>
            <person name="Sun H."/>
            <person name="Tallon L.J."/>
            <person name="Tambunga G."/>
            <person name="Toriumi M.J."/>
            <person name="Town C.D."/>
            <person name="Utterback T."/>
            <person name="Van Aken S."/>
            <person name="Vaysberg M."/>
            <person name="Vysotskaia V.S."/>
            <person name="Walker M."/>
            <person name="Wu D."/>
            <person name="Yu G."/>
            <person name="Fraser C.M."/>
            <person name="Venter J.C."/>
            <person name="Davis R.W."/>
        </authorList>
    </citation>
    <scope>NUCLEOTIDE SEQUENCE [LARGE SCALE GENOMIC DNA]</scope>
    <source>
        <strain>cv. Columbia</strain>
    </source>
</reference>
<reference key="2">
    <citation type="journal article" date="2017" name="Plant J.">
        <title>Araport11: a complete reannotation of the Arabidopsis thaliana reference genome.</title>
        <authorList>
            <person name="Cheng C.Y."/>
            <person name="Krishnakumar V."/>
            <person name="Chan A.P."/>
            <person name="Thibaud-Nissen F."/>
            <person name="Schobel S."/>
            <person name="Town C.D."/>
        </authorList>
    </citation>
    <scope>GENOME REANNOTATION</scope>
    <source>
        <strain>cv. Columbia</strain>
    </source>
</reference>
<reference key="3">
    <citation type="journal article" date="2004" name="Plant Cell">
        <title>Genome-wide analysis of Arabidopsis pentatricopeptide repeat proteins reveals their essential role in organelle biogenesis.</title>
        <authorList>
            <person name="Lurin C."/>
            <person name="Andres C."/>
            <person name="Aubourg S."/>
            <person name="Bellaoui M."/>
            <person name="Bitton F."/>
            <person name="Bruyere C."/>
            <person name="Caboche M."/>
            <person name="Debast C."/>
            <person name="Gualberto J."/>
            <person name="Hoffmann B."/>
            <person name="Lecharny A."/>
            <person name="Le Ret M."/>
            <person name="Martin-Magniette M.-L."/>
            <person name="Mireau H."/>
            <person name="Peeters N."/>
            <person name="Renou J.-P."/>
            <person name="Szurek B."/>
            <person name="Taconnat L."/>
            <person name="Small I."/>
        </authorList>
    </citation>
    <scope>GENE FAMILY</scope>
</reference>
<reference key="4">
    <citation type="journal article" date="2015" name="J. Exp. Bot.">
        <title>Identification of cleavage sites and substrate proteins for two mitochondrial intermediate peptidases in Arabidopsis thaliana.</title>
        <authorList>
            <person name="Carrie C."/>
            <person name="Venne A.S."/>
            <person name="Zahedi R.P."/>
            <person name="Soll J."/>
        </authorList>
    </citation>
    <scope>IDENTIFICATION BY MASS SPECTROMETRY</scope>
    <scope>CLEAVAGE OF TRANSIT PEPTIDE AFTER TYR-23</scope>
</reference>
<dbReference type="EMBL" id="AC006216">
    <property type="protein sequence ID" value="AAD12672.1"/>
    <property type="molecule type" value="Genomic_DNA"/>
</dbReference>
<dbReference type="EMBL" id="CP002684">
    <property type="status" value="NOT_ANNOTATED_CDS"/>
    <property type="molecule type" value="Genomic_DNA"/>
</dbReference>
<dbReference type="PIR" id="B96559">
    <property type="entry name" value="B96559"/>
</dbReference>
<dbReference type="SMR" id="Q9ZU27"/>
<dbReference type="STRING" id="3702.Q9ZU27"/>
<dbReference type="PaxDb" id="3702-AT1G51965.1"/>
<dbReference type="Araport" id="AT1G51965"/>
<dbReference type="TAIR" id="AT1G51965">
    <property type="gene designation" value="ABO5"/>
</dbReference>
<dbReference type="eggNOG" id="KOG4197">
    <property type="taxonomic scope" value="Eukaryota"/>
</dbReference>
<dbReference type="HOGENOM" id="CLU_002706_49_8_1"/>
<dbReference type="InParanoid" id="Q9ZU27"/>
<dbReference type="PhylomeDB" id="Q9ZU27"/>
<dbReference type="PRO" id="PR:Q9ZU27"/>
<dbReference type="Proteomes" id="UP000006548">
    <property type="component" value="Chromosome 1"/>
</dbReference>
<dbReference type="ExpressionAtlas" id="Q9ZU27">
    <property type="expression patterns" value="baseline and differential"/>
</dbReference>
<dbReference type="GO" id="GO:0005739">
    <property type="term" value="C:mitochondrion"/>
    <property type="evidence" value="ECO:0000314"/>
    <property type="project" value="TAIR"/>
</dbReference>
<dbReference type="GO" id="GO:0009737">
    <property type="term" value="P:response to abscisic acid"/>
    <property type="evidence" value="ECO:0000315"/>
    <property type="project" value="TAIR"/>
</dbReference>
<dbReference type="GO" id="GO:0008380">
    <property type="term" value="P:RNA splicing"/>
    <property type="evidence" value="ECO:0000315"/>
    <property type="project" value="TAIR"/>
</dbReference>
<dbReference type="FunFam" id="1.25.40.10:FF:002103">
    <property type="entry name" value="Pentatricopeptide repeat-containing protein At1g51965, mitochondrial"/>
    <property type="match status" value="1"/>
</dbReference>
<dbReference type="FunFam" id="1.25.40.10:FF:000577">
    <property type="entry name" value="Pentatricopeptide repeat-containing protein mitochondrial"/>
    <property type="match status" value="1"/>
</dbReference>
<dbReference type="FunFam" id="1.25.40.10:FF:000605">
    <property type="entry name" value="Pentatricopeptide repeat-containing protein, mitochondrial"/>
    <property type="match status" value="1"/>
</dbReference>
<dbReference type="Gene3D" id="1.25.40.10">
    <property type="entry name" value="Tetratricopeptide repeat domain"/>
    <property type="match status" value="5"/>
</dbReference>
<dbReference type="InterPro" id="IPR002885">
    <property type="entry name" value="Pentatricopeptide_rpt"/>
</dbReference>
<dbReference type="InterPro" id="IPR011990">
    <property type="entry name" value="TPR-like_helical_dom_sf"/>
</dbReference>
<dbReference type="NCBIfam" id="TIGR00756">
    <property type="entry name" value="PPR"/>
    <property type="match status" value="9"/>
</dbReference>
<dbReference type="PANTHER" id="PTHR47936:SF1">
    <property type="entry name" value="PENTATRICOPEPTIDE REPEAT-CONTAINING PROTEIN GUN1, CHLOROPLASTIC"/>
    <property type="match status" value="1"/>
</dbReference>
<dbReference type="PANTHER" id="PTHR47936">
    <property type="entry name" value="PPR_LONG DOMAIN-CONTAINING PROTEIN"/>
    <property type="match status" value="1"/>
</dbReference>
<dbReference type="Pfam" id="PF01535">
    <property type="entry name" value="PPR"/>
    <property type="match status" value="3"/>
</dbReference>
<dbReference type="Pfam" id="PF13041">
    <property type="entry name" value="PPR_2"/>
    <property type="match status" value="5"/>
</dbReference>
<dbReference type="SUPFAM" id="SSF81901">
    <property type="entry name" value="HCP-like"/>
    <property type="match status" value="1"/>
</dbReference>
<dbReference type="PROSITE" id="PS51375">
    <property type="entry name" value="PPR"/>
    <property type="match status" value="12"/>
</dbReference>
<evidence type="ECO:0000269" key="1">
    <source>
    </source>
</evidence>
<evidence type="ECO:0000305" key="2"/>
<evidence type="ECO:0000305" key="3">
    <source>
    </source>
</evidence>
<name>PPR76_ARATH</name>
<protein>
    <recommendedName>
        <fullName>Pentatricopeptide repeat-containing protein At1g51965, mitochondrial</fullName>
    </recommendedName>
</protein>
<organism>
    <name type="scientific">Arabidopsis thaliana</name>
    <name type="common">Mouse-ear cress</name>
    <dbReference type="NCBI Taxonomy" id="3702"/>
    <lineage>
        <taxon>Eukaryota</taxon>
        <taxon>Viridiplantae</taxon>
        <taxon>Streptophyta</taxon>
        <taxon>Embryophyta</taxon>
        <taxon>Tracheophyta</taxon>
        <taxon>Spermatophyta</taxon>
        <taxon>Magnoliopsida</taxon>
        <taxon>eudicotyledons</taxon>
        <taxon>Gunneridae</taxon>
        <taxon>Pentapetalae</taxon>
        <taxon>rosids</taxon>
        <taxon>malvids</taxon>
        <taxon>Brassicales</taxon>
        <taxon>Brassicaceae</taxon>
        <taxon>Camelineae</taxon>
        <taxon>Arabidopsis</taxon>
    </lineage>
</organism>
<feature type="transit peptide" description="Mitochondrion" evidence="1">
    <location>
        <begin position="1"/>
        <end position="23"/>
    </location>
</feature>
<feature type="chain" id="PRO_0000342817" description="Pentatricopeptide repeat-containing protein At1g51965, mitochondrial">
    <location>
        <begin position="24"/>
        <end position="650"/>
    </location>
</feature>
<feature type="repeat" description="PPR 1">
    <location>
        <begin position="132"/>
        <end position="169"/>
    </location>
</feature>
<feature type="repeat" description="PPR 2">
    <location>
        <begin position="170"/>
        <end position="200"/>
    </location>
</feature>
<feature type="repeat" description="PPR 3">
    <location>
        <begin position="202"/>
        <end position="236"/>
    </location>
</feature>
<feature type="repeat" description="PPR 4">
    <location>
        <begin position="237"/>
        <end position="267"/>
    </location>
</feature>
<feature type="repeat" description="PPR 5">
    <location>
        <begin position="269"/>
        <end position="303"/>
    </location>
</feature>
<feature type="repeat" description="PPR 6">
    <location>
        <begin position="304"/>
        <end position="338"/>
    </location>
</feature>
<feature type="repeat" description="PPR 7">
    <location>
        <begin position="339"/>
        <end position="369"/>
    </location>
</feature>
<feature type="repeat" description="PPR 8">
    <location>
        <begin position="371"/>
        <end position="405"/>
    </location>
</feature>
<feature type="repeat" description="PPR 9">
    <location>
        <begin position="406"/>
        <end position="440"/>
    </location>
</feature>
<feature type="repeat" description="PPR 10">
    <location>
        <begin position="441"/>
        <end position="475"/>
    </location>
</feature>
<feature type="repeat" description="PPR 11">
    <location>
        <begin position="476"/>
        <end position="510"/>
    </location>
</feature>
<feature type="repeat" description="PPR 12">
    <location>
        <begin position="511"/>
        <end position="545"/>
    </location>
</feature>
<feature type="repeat" description="PPR 13">
    <location>
        <begin position="546"/>
        <end position="580"/>
    </location>
</feature>
<feature type="repeat" description="PPR 14">
    <location>
        <begin position="581"/>
        <end position="615"/>
    </location>
</feature>